<evidence type="ECO:0000305" key="1"/>
<keyword id="KW-1267">Proteomics identification</keyword>
<keyword id="KW-1185">Reference proteome</keyword>
<accession>Q5U5X8</accession>
<accession>Q8NCD5</accession>
<accession>Q96SP6</accession>
<dbReference type="EMBL" id="AK027627">
    <property type="protein sequence ID" value="BAB55244.1"/>
    <property type="molecule type" value="mRNA"/>
</dbReference>
<dbReference type="EMBL" id="AK074806">
    <property type="protein sequence ID" value="BAC11219.1"/>
    <property type="status" value="ALT_INIT"/>
    <property type="molecule type" value="mRNA"/>
</dbReference>
<dbReference type="EMBL" id="AC007834">
    <property type="status" value="NOT_ANNOTATED_CDS"/>
    <property type="molecule type" value="Genomic_DNA"/>
</dbReference>
<dbReference type="EMBL" id="BC037221">
    <property type="protein sequence ID" value="AAH37221.1"/>
    <property type="molecule type" value="mRNA"/>
</dbReference>
<dbReference type="CCDS" id="CCDS9133.1"/>
<dbReference type="RefSeq" id="NP_116218.2">
    <property type="nucleotide sequence ID" value="NM_032829.3"/>
</dbReference>
<dbReference type="RefSeq" id="XP_006719717.1">
    <property type="nucleotide sequence ID" value="XM_006719654.2"/>
</dbReference>
<dbReference type="RefSeq" id="XP_016875544.1">
    <property type="nucleotide sequence ID" value="XM_017020055.2"/>
</dbReference>
<dbReference type="RefSeq" id="XP_047285704.1">
    <property type="nucleotide sequence ID" value="XM_047429748.1"/>
</dbReference>
<dbReference type="RefSeq" id="XP_047285705.1">
    <property type="nucleotide sequence ID" value="XM_047429749.1"/>
</dbReference>
<dbReference type="RefSeq" id="XP_054229568.1">
    <property type="nucleotide sequence ID" value="XM_054373593.1"/>
</dbReference>
<dbReference type="RefSeq" id="XP_054229569.1">
    <property type="nucleotide sequence ID" value="XM_054373594.1"/>
</dbReference>
<dbReference type="RefSeq" id="XP_054229570.1">
    <property type="nucleotide sequence ID" value="XM_054373595.1"/>
</dbReference>
<dbReference type="BioGRID" id="124352">
    <property type="interactions" value="14"/>
</dbReference>
<dbReference type="FunCoup" id="Q5U5X8">
    <property type="interactions" value="68"/>
</dbReference>
<dbReference type="IntAct" id="Q5U5X8">
    <property type="interactions" value="8"/>
</dbReference>
<dbReference type="MINT" id="Q5U5X8"/>
<dbReference type="STRING" id="9606.ENSP00000443292"/>
<dbReference type="GlyGen" id="Q5U5X8">
    <property type="glycosylation" value="1 site, 1 O-linked glycan (1 site)"/>
</dbReference>
<dbReference type="iPTMnet" id="Q5U5X8"/>
<dbReference type="PhosphoSitePlus" id="Q5U5X8"/>
<dbReference type="BioMuta" id="FAM222A"/>
<dbReference type="DMDM" id="74736192"/>
<dbReference type="MassIVE" id="Q5U5X8"/>
<dbReference type="PaxDb" id="9606-ENSP00000443292"/>
<dbReference type="PeptideAtlas" id="Q5U5X8"/>
<dbReference type="ProteomicsDB" id="65233"/>
<dbReference type="Antibodypedia" id="48247">
    <property type="antibodies" value="34 antibodies from 11 providers"/>
</dbReference>
<dbReference type="DNASU" id="84915"/>
<dbReference type="Ensembl" id="ENST00000358906.3">
    <property type="protein sequence ID" value="ENSP00000351783.3"/>
    <property type="gene ID" value="ENSG00000139438.6"/>
</dbReference>
<dbReference type="Ensembl" id="ENST00000538780.2">
    <property type="protein sequence ID" value="ENSP00000443292.1"/>
    <property type="gene ID" value="ENSG00000139438.6"/>
</dbReference>
<dbReference type="GeneID" id="84915"/>
<dbReference type="KEGG" id="hsa:84915"/>
<dbReference type="MANE-Select" id="ENST00000538780.2">
    <property type="protein sequence ID" value="ENSP00000443292.1"/>
    <property type="RefSeq nucleotide sequence ID" value="NM_032829.3"/>
    <property type="RefSeq protein sequence ID" value="NP_116218.2"/>
</dbReference>
<dbReference type="UCSC" id="uc001tpd.3">
    <property type="organism name" value="human"/>
</dbReference>
<dbReference type="AGR" id="HGNC:25915"/>
<dbReference type="CTD" id="84915"/>
<dbReference type="DisGeNET" id="84915"/>
<dbReference type="GeneCards" id="FAM222A"/>
<dbReference type="HGNC" id="HGNC:25915">
    <property type="gene designation" value="FAM222A"/>
</dbReference>
<dbReference type="HPA" id="ENSG00000139438">
    <property type="expression patterns" value="Tissue enhanced (brain)"/>
</dbReference>
<dbReference type="MalaCards" id="FAM222A"/>
<dbReference type="neXtProt" id="NX_Q5U5X8"/>
<dbReference type="OpenTargets" id="ENSG00000139438"/>
<dbReference type="PharmGKB" id="PA143485364"/>
<dbReference type="VEuPathDB" id="HostDB:ENSG00000139438"/>
<dbReference type="eggNOG" id="ENOG502QPV4">
    <property type="taxonomic scope" value="Eukaryota"/>
</dbReference>
<dbReference type="GeneTree" id="ENSGT00530000063811"/>
<dbReference type="HOGENOM" id="CLU_027495_1_0_1"/>
<dbReference type="InParanoid" id="Q5U5X8"/>
<dbReference type="OMA" id="QQHLRMY"/>
<dbReference type="OrthoDB" id="8932586at2759"/>
<dbReference type="PAN-GO" id="Q5U5X8">
    <property type="GO annotations" value="0 GO annotations based on evolutionary models"/>
</dbReference>
<dbReference type="PhylomeDB" id="Q5U5X8"/>
<dbReference type="TreeFam" id="TF331508"/>
<dbReference type="PathwayCommons" id="Q5U5X8"/>
<dbReference type="SignaLink" id="Q5U5X8"/>
<dbReference type="BioGRID-ORCS" id="84915">
    <property type="hits" value="12 hits in 1153 CRISPR screens"/>
</dbReference>
<dbReference type="ChiTaRS" id="FAM222A">
    <property type="organism name" value="human"/>
</dbReference>
<dbReference type="GenomeRNAi" id="84915"/>
<dbReference type="Pharos" id="Q5U5X8">
    <property type="development level" value="Tdark"/>
</dbReference>
<dbReference type="PRO" id="PR:Q5U5X8"/>
<dbReference type="Proteomes" id="UP000005640">
    <property type="component" value="Chromosome 12"/>
</dbReference>
<dbReference type="RNAct" id="Q5U5X8">
    <property type="molecule type" value="protein"/>
</dbReference>
<dbReference type="Bgee" id="ENSG00000139438">
    <property type="expression patterns" value="Expressed in C1 segment of cervical spinal cord and 134 other cell types or tissues"/>
</dbReference>
<dbReference type="ExpressionAtlas" id="Q5U5X8">
    <property type="expression patterns" value="baseline and differential"/>
</dbReference>
<dbReference type="InterPro" id="IPR029340">
    <property type="entry name" value="FAM222"/>
</dbReference>
<dbReference type="PANTHER" id="PTHR16070:SF2">
    <property type="entry name" value="PROTEIN FAM222A"/>
    <property type="match status" value="1"/>
</dbReference>
<dbReference type="PANTHER" id="PTHR16070">
    <property type="entry name" value="PROTEIN FAM222A-RELATED"/>
    <property type="match status" value="1"/>
</dbReference>
<dbReference type="Pfam" id="PF15258">
    <property type="entry name" value="FAM222A"/>
    <property type="match status" value="1"/>
</dbReference>
<reference key="1">
    <citation type="journal article" date="2004" name="Nat. Genet.">
        <title>Complete sequencing and characterization of 21,243 full-length human cDNAs.</title>
        <authorList>
            <person name="Ota T."/>
            <person name="Suzuki Y."/>
            <person name="Nishikawa T."/>
            <person name="Otsuki T."/>
            <person name="Sugiyama T."/>
            <person name="Irie R."/>
            <person name="Wakamatsu A."/>
            <person name="Hayashi K."/>
            <person name="Sato H."/>
            <person name="Nagai K."/>
            <person name="Kimura K."/>
            <person name="Makita H."/>
            <person name="Sekine M."/>
            <person name="Obayashi M."/>
            <person name="Nishi T."/>
            <person name="Shibahara T."/>
            <person name="Tanaka T."/>
            <person name="Ishii S."/>
            <person name="Yamamoto J."/>
            <person name="Saito K."/>
            <person name="Kawai Y."/>
            <person name="Isono Y."/>
            <person name="Nakamura Y."/>
            <person name="Nagahari K."/>
            <person name="Murakami K."/>
            <person name="Yasuda T."/>
            <person name="Iwayanagi T."/>
            <person name="Wagatsuma M."/>
            <person name="Shiratori A."/>
            <person name="Sudo H."/>
            <person name="Hosoiri T."/>
            <person name="Kaku Y."/>
            <person name="Kodaira H."/>
            <person name="Kondo H."/>
            <person name="Sugawara M."/>
            <person name="Takahashi M."/>
            <person name="Kanda K."/>
            <person name="Yokoi T."/>
            <person name="Furuya T."/>
            <person name="Kikkawa E."/>
            <person name="Omura Y."/>
            <person name="Abe K."/>
            <person name="Kamihara K."/>
            <person name="Katsuta N."/>
            <person name="Sato K."/>
            <person name="Tanikawa M."/>
            <person name="Yamazaki M."/>
            <person name="Ninomiya K."/>
            <person name="Ishibashi T."/>
            <person name="Yamashita H."/>
            <person name="Murakawa K."/>
            <person name="Fujimori K."/>
            <person name="Tanai H."/>
            <person name="Kimata M."/>
            <person name="Watanabe M."/>
            <person name="Hiraoka S."/>
            <person name="Chiba Y."/>
            <person name="Ishida S."/>
            <person name="Ono Y."/>
            <person name="Takiguchi S."/>
            <person name="Watanabe S."/>
            <person name="Yosida M."/>
            <person name="Hotuta T."/>
            <person name="Kusano J."/>
            <person name="Kanehori K."/>
            <person name="Takahashi-Fujii A."/>
            <person name="Hara H."/>
            <person name="Tanase T.-O."/>
            <person name="Nomura Y."/>
            <person name="Togiya S."/>
            <person name="Komai F."/>
            <person name="Hara R."/>
            <person name="Takeuchi K."/>
            <person name="Arita M."/>
            <person name="Imose N."/>
            <person name="Musashino K."/>
            <person name="Yuuki H."/>
            <person name="Oshima A."/>
            <person name="Sasaki N."/>
            <person name="Aotsuka S."/>
            <person name="Yoshikawa Y."/>
            <person name="Matsunawa H."/>
            <person name="Ichihara T."/>
            <person name="Shiohata N."/>
            <person name="Sano S."/>
            <person name="Moriya S."/>
            <person name="Momiyama H."/>
            <person name="Satoh N."/>
            <person name="Takami S."/>
            <person name="Terashima Y."/>
            <person name="Suzuki O."/>
            <person name="Nakagawa S."/>
            <person name="Senoh A."/>
            <person name="Mizoguchi H."/>
            <person name="Goto Y."/>
            <person name="Shimizu F."/>
            <person name="Wakebe H."/>
            <person name="Hishigaki H."/>
            <person name="Watanabe T."/>
            <person name="Sugiyama A."/>
            <person name="Takemoto M."/>
            <person name="Kawakami B."/>
            <person name="Yamazaki M."/>
            <person name="Watanabe K."/>
            <person name="Kumagai A."/>
            <person name="Itakura S."/>
            <person name="Fukuzumi Y."/>
            <person name="Fujimori Y."/>
            <person name="Komiyama M."/>
            <person name="Tashiro H."/>
            <person name="Tanigami A."/>
            <person name="Fujiwara T."/>
            <person name="Ono T."/>
            <person name="Yamada K."/>
            <person name="Fujii Y."/>
            <person name="Ozaki K."/>
            <person name="Hirao M."/>
            <person name="Ohmori Y."/>
            <person name="Kawabata A."/>
            <person name="Hikiji T."/>
            <person name="Kobatake N."/>
            <person name="Inagaki H."/>
            <person name="Ikema Y."/>
            <person name="Okamoto S."/>
            <person name="Okitani R."/>
            <person name="Kawakami T."/>
            <person name="Noguchi S."/>
            <person name="Itoh T."/>
            <person name="Shigeta K."/>
            <person name="Senba T."/>
            <person name="Matsumura K."/>
            <person name="Nakajima Y."/>
            <person name="Mizuno T."/>
            <person name="Morinaga M."/>
            <person name="Sasaki M."/>
            <person name="Togashi T."/>
            <person name="Oyama M."/>
            <person name="Hata H."/>
            <person name="Watanabe M."/>
            <person name="Komatsu T."/>
            <person name="Mizushima-Sugano J."/>
            <person name="Satoh T."/>
            <person name="Shirai Y."/>
            <person name="Takahashi Y."/>
            <person name="Nakagawa K."/>
            <person name="Okumura K."/>
            <person name="Nagase T."/>
            <person name="Nomura N."/>
            <person name="Kikuchi H."/>
            <person name="Masuho Y."/>
            <person name="Yamashita R."/>
            <person name="Nakai K."/>
            <person name="Yada T."/>
            <person name="Nakamura Y."/>
            <person name="Ohara O."/>
            <person name="Isogai T."/>
            <person name="Sugano S."/>
        </authorList>
    </citation>
    <scope>NUCLEOTIDE SEQUENCE [LARGE SCALE MRNA]</scope>
    <source>
        <tissue>Teratocarcinoma</tissue>
    </source>
</reference>
<reference key="2">
    <citation type="journal article" date="2006" name="Nature">
        <title>The finished DNA sequence of human chromosome 12.</title>
        <authorList>
            <person name="Scherer S.E."/>
            <person name="Muzny D.M."/>
            <person name="Buhay C.J."/>
            <person name="Chen R."/>
            <person name="Cree A."/>
            <person name="Ding Y."/>
            <person name="Dugan-Rocha S."/>
            <person name="Gill R."/>
            <person name="Gunaratne P."/>
            <person name="Harris R.A."/>
            <person name="Hawes A.C."/>
            <person name="Hernandez J."/>
            <person name="Hodgson A.V."/>
            <person name="Hume J."/>
            <person name="Jackson A."/>
            <person name="Khan Z.M."/>
            <person name="Kovar-Smith C."/>
            <person name="Lewis L.R."/>
            <person name="Lozado R.J."/>
            <person name="Metzker M.L."/>
            <person name="Milosavljevic A."/>
            <person name="Miner G.R."/>
            <person name="Montgomery K.T."/>
            <person name="Morgan M.B."/>
            <person name="Nazareth L.V."/>
            <person name="Scott G."/>
            <person name="Sodergren E."/>
            <person name="Song X.-Z."/>
            <person name="Steffen D."/>
            <person name="Lovering R.C."/>
            <person name="Wheeler D.A."/>
            <person name="Worley K.C."/>
            <person name="Yuan Y."/>
            <person name="Zhang Z."/>
            <person name="Adams C.Q."/>
            <person name="Ansari-Lari M.A."/>
            <person name="Ayele M."/>
            <person name="Brown M.J."/>
            <person name="Chen G."/>
            <person name="Chen Z."/>
            <person name="Clerc-Blankenburg K.P."/>
            <person name="Davis C."/>
            <person name="Delgado O."/>
            <person name="Dinh H.H."/>
            <person name="Draper H."/>
            <person name="Gonzalez-Garay M.L."/>
            <person name="Havlak P."/>
            <person name="Jackson L.R."/>
            <person name="Jacob L.S."/>
            <person name="Kelly S.H."/>
            <person name="Li L."/>
            <person name="Li Z."/>
            <person name="Liu J."/>
            <person name="Liu W."/>
            <person name="Lu J."/>
            <person name="Maheshwari M."/>
            <person name="Nguyen B.-V."/>
            <person name="Okwuonu G.O."/>
            <person name="Pasternak S."/>
            <person name="Perez L.M."/>
            <person name="Plopper F.J.H."/>
            <person name="Santibanez J."/>
            <person name="Shen H."/>
            <person name="Tabor P.E."/>
            <person name="Verduzco D."/>
            <person name="Waldron L."/>
            <person name="Wang Q."/>
            <person name="Williams G.A."/>
            <person name="Zhang J."/>
            <person name="Zhou J."/>
            <person name="Allen C.C."/>
            <person name="Amin A.G."/>
            <person name="Anyalebechi V."/>
            <person name="Bailey M."/>
            <person name="Barbaria J.A."/>
            <person name="Bimage K.E."/>
            <person name="Bryant N.P."/>
            <person name="Burch P.E."/>
            <person name="Burkett C.E."/>
            <person name="Burrell K.L."/>
            <person name="Calderon E."/>
            <person name="Cardenas V."/>
            <person name="Carter K."/>
            <person name="Casias K."/>
            <person name="Cavazos I."/>
            <person name="Cavazos S.R."/>
            <person name="Ceasar H."/>
            <person name="Chacko J."/>
            <person name="Chan S.N."/>
            <person name="Chavez D."/>
            <person name="Christopoulos C."/>
            <person name="Chu J."/>
            <person name="Cockrell R."/>
            <person name="Cox C.D."/>
            <person name="Dang M."/>
            <person name="Dathorne S.R."/>
            <person name="David R."/>
            <person name="Davis C.M."/>
            <person name="Davy-Carroll L."/>
            <person name="Deshazo D.R."/>
            <person name="Donlin J.E."/>
            <person name="D'Souza L."/>
            <person name="Eaves K.A."/>
            <person name="Egan A."/>
            <person name="Emery-Cohen A.J."/>
            <person name="Escotto M."/>
            <person name="Flagg N."/>
            <person name="Forbes L.D."/>
            <person name="Gabisi A.M."/>
            <person name="Garza M."/>
            <person name="Hamilton C."/>
            <person name="Henderson N."/>
            <person name="Hernandez O."/>
            <person name="Hines S."/>
            <person name="Hogues M.E."/>
            <person name="Huang M."/>
            <person name="Idlebird D.G."/>
            <person name="Johnson R."/>
            <person name="Jolivet A."/>
            <person name="Jones S."/>
            <person name="Kagan R."/>
            <person name="King L.M."/>
            <person name="Leal B."/>
            <person name="Lebow H."/>
            <person name="Lee S."/>
            <person name="LeVan J.M."/>
            <person name="Lewis L.C."/>
            <person name="London P."/>
            <person name="Lorensuhewa L.M."/>
            <person name="Loulseged H."/>
            <person name="Lovett D.A."/>
            <person name="Lucier A."/>
            <person name="Lucier R.L."/>
            <person name="Ma J."/>
            <person name="Madu R.C."/>
            <person name="Mapua P."/>
            <person name="Martindale A.D."/>
            <person name="Martinez E."/>
            <person name="Massey E."/>
            <person name="Mawhiney S."/>
            <person name="Meador M.G."/>
            <person name="Mendez S."/>
            <person name="Mercado C."/>
            <person name="Mercado I.C."/>
            <person name="Merritt C.E."/>
            <person name="Miner Z.L."/>
            <person name="Minja E."/>
            <person name="Mitchell T."/>
            <person name="Mohabbat F."/>
            <person name="Mohabbat K."/>
            <person name="Montgomery B."/>
            <person name="Moore N."/>
            <person name="Morris S."/>
            <person name="Munidasa M."/>
            <person name="Ngo R.N."/>
            <person name="Nguyen N.B."/>
            <person name="Nickerson E."/>
            <person name="Nwaokelemeh O.O."/>
            <person name="Nwokenkwo S."/>
            <person name="Obregon M."/>
            <person name="Oguh M."/>
            <person name="Oragunye N."/>
            <person name="Oviedo R.J."/>
            <person name="Parish B.J."/>
            <person name="Parker D.N."/>
            <person name="Parrish J."/>
            <person name="Parks K.L."/>
            <person name="Paul H.A."/>
            <person name="Payton B.A."/>
            <person name="Perez A."/>
            <person name="Perrin W."/>
            <person name="Pickens A."/>
            <person name="Primus E.L."/>
            <person name="Pu L.-L."/>
            <person name="Puazo M."/>
            <person name="Quiles M.M."/>
            <person name="Quiroz J.B."/>
            <person name="Rabata D."/>
            <person name="Reeves K."/>
            <person name="Ruiz S.J."/>
            <person name="Shao H."/>
            <person name="Sisson I."/>
            <person name="Sonaike T."/>
            <person name="Sorelle R.P."/>
            <person name="Sutton A.E."/>
            <person name="Svatek A.F."/>
            <person name="Svetz L.A."/>
            <person name="Tamerisa K.S."/>
            <person name="Taylor T.R."/>
            <person name="Teague B."/>
            <person name="Thomas N."/>
            <person name="Thorn R.D."/>
            <person name="Trejos Z.Y."/>
            <person name="Trevino B.K."/>
            <person name="Ukegbu O.N."/>
            <person name="Urban J.B."/>
            <person name="Vasquez L.I."/>
            <person name="Vera V.A."/>
            <person name="Villasana D.M."/>
            <person name="Wang L."/>
            <person name="Ward-Moore S."/>
            <person name="Warren J.T."/>
            <person name="Wei X."/>
            <person name="White F."/>
            <person name="Williamson A.L."/>
            <person name="Wleczyk R."/>
            <person name="Wooden H.S."/>
            <person name="Wooden S.H."/>
            <person name="Yen J."/>
            <person name="Yoon L."/>
            <person name="Yoon V."/>
            <person name="Zorrilla S.E."/>
            <person name="Nelson D."/>
            <person name="Kucherlapati R."/>
            <person name="Weinstock G."/>
            <person name="Gibbs R.A."/>
        </authorList>
    </citation>
    <scope>NUCLEOTIDE SEQUENCE [LARGE SCALE GENOMIC DNA]</scope>
</reference>
<reference key="3">
    <citation type="journal article" date="2004" name="Genome Res.">
        <title>The status, quality, and expansion of the NIH full-length cDNA project: the Mammalian Gene Collection (MGC).</title>
        <authorList>
            <consortium name="The MGC Project Team"/>
        </authorList>
    </citation>
    <scope>NUCLEOTIDE SEQUENCE [LARGE SCALE MRNA]</scope>
    <source>
        <tissue>Brain</tissue>
    </source>
</reference>
<protein>
    <recommendedName>
        <fullName>Protein FAM222A</fullName>
    </recommendedName>
</protein>
<feature type="chain" id="PRO_0000274239" description="Protein FAM222A">
    <location>
        <begin position="1"/>
        <end position="452"/>
    </location>
</feature>
<feature type="sequence conflict" description="In Ref. 1; BAB55244." evidence="1" ref="1">
    <original>S</original>
    <variation>G</variation>
    <location>
        <position position="85"/>
    </location>
</feature>
<feature type="sequence conflict" description="In Ref. 1; BAC11219." evidence="1" ref="1">
    <original>A</original>
    <variation>V</variation>
    <location>
        <position position="347"/>
    </location>
</feature>
<feature type="sequence conflict" description="In Ref. 1; BAB55244." evidence="1" ref="1">
    <original>C</original>
    <variation>Y</variation>
    <location>
        <position position="360"/>
    </location>
</feature>
<comment type="similarity">
    <text evidence="1">Belongs to the FAM222 family.</text>
</comment>
<comment type="sequence caution" evidence="1">
    <conflict type="erroneous initiation">
        <sequence resource="EMBL-CDS" id="BAC11219"/>
    </conflict>
    <text>Truncated N-terminus.</text>
</comment>
<proteinExistence type="evidence at protein level"/>
<name>F222A_HUMAN</name>
<organism>
    <name type="scientific">Homo sapiens</name>
    <name type="common">Human</name>
    <dbReference type="NCBI Taxonomy" id="9606"/>
    <lineage>
        <taxon>Eukaryota</taxon>
        <taxon>Metazoa</taxon>
        <taxon>Chordata</taxon>
        <taxon>Craniata</taxon>
        <taxon>Vertebrata</taxon>
        <taxon>Euteleostomi</taxon>
        <taxon>Mammalia</taxon>
        <taxon>Eutheria</taxon>
        <taxon>Euarchontoglires</taxon>
        <taxon>Primates</taxon>
        <taxon>Haplorrhini</taxon>
        <taxon>Catarrhini</taxon>
        <taxon>Hominidae</taxon>
        <taxon>Homo</taxon>
    </lineage>
</organism>
<gene>
    <name type="primary">FAM222A</name>
    <name type="synonym">C12orf34</name>
</gene>
<sequence length="452" mass="46792">MLACLQRTQNAPGQHLACPSKSLELRKCEAVASAMHSSRYPSPAELDAYAEKVANSPLSIKIFPTNIRVPQHKHLSRTVNGYDTSGQRYSPYPQHTAGYQGLLAIVKAAVSSSSTAAPAGPAKSVLKSAEGKRTKLSPAAVQVGIAPYPVPSTLGPLAYPKPPEAPAPPPGLPAAATAASVIPLPGRGLPLPPSNLPSIHSLLYQLNQQCQAPGAAPPACQGMAIPHPSPAKHGPVPSFPSMAYSAAAGLPDCRKGTELGQGATQALTLAGAAKPAGYADSGLDYLLWPQKPPPPPPQPLRAYSGSTVASKSPEACGGRAYERASGSPLNCGVGLPTSFTVGQYFAAPWNSVLVTPTSDCYNPAAAVVVTELGPGAARELAGPPADALSGLPSKSVCNTSVLSSSLQSLEYLINDIRPPCIKEQMLGKGYETVAVPRLLDHQHAHIRLPVYR</sequence>